<protein>
    <recommendedName>
        <fullName evidence="3">Cyclohexanol dehydrogenase</fullName>
        <ecNumber evidence="5">1.1.1.245</ecNumber>
    </recommendedName>
</protein>
<reference key="1">
    <citation type="journal article" date="2000" name="J. Bacteriol.">
        <title>Genetic analysis of a gene cluster for cyclohexanol oxidation in Acinetobacter sp. strain SE19 by in vitro transposition.</title>
        <authorList>
            <person name="Cheng Q."/>
            <person name="Thomas S.M."/>
            <person name="Kostichka K."/>
            <person name="Valentine J.R."/>
            <person name="Nagarajan V."/>
        </authorList>
    </citation>
    <scope>NUCLEOTIDE SEQUENCE [GENOMIC DNA]</scope>
    <scope>FUNCTION</scope>
    <scope>CATALYTIC ACTIVITY</scope>
    <scope>DISRUPTION PHENOTYPE</scope>
    <source>
        <strain>SE19</strain>
    </source>
</reference>
<name>CHNA_ACISS</name>
<accession>Q9F7E0</accession>
<gene>
    <name evidence="3" type="primary">chnA</name>
</gene>
<dbReference type="EC" id="1.1.1.245" evidence="5"/>
<dbReference type="EMBL" id="AF282240">
    <property type="protein sequence ID" value="AAG10026.1"/>
    <property type="molecule type" value="Genomic_DNA"/>
</dbReference>
<dbReference type="SMR" id="Q9F7E0"/>
<dbReference type="BioCyc" id="MetaCyc:MONOMER-3121"/>
<dbReference type="GO" id="GO:0016491">
    <property type="term" value="F:oxidoreductase activity"/>
    <property type="evidence" value="ECO:0007669"/>
    <property type="project" value="UniProtKB-KW"/>
</dbReference>
<dbReference type="FunFam" id="3.40.50.720:FF:000084">
    <property type="entry name" value="Short-chain dehydrogenase reductase"/>
    <property type="match status" value="1"/>
</dbReference>
<dbReference type="Gene3D" id="3.40.50.720">
    <property type="entry name" value="NAD(P)-binding Rossmann-like Domain"/>
    <property type="match status" value="1"/>
</dbReference>
<dbReference type="InterPro" id="IPR036291">
    <property type="entry name" value="NAD(P)-bd_dom_sf"/>
</dbReference>
<dbReference type="InterPro" id="IPR020904">
    <property type="entry name" value="Sc_DH/Rdtase_CS"/>
</dbReference>
<dbReference type="InterPro" id="IPR002347">
    <property type="entry name" value="SDR_fam"/>
</dbReference>
<dbReference type="NCBIfam" id="NF005559">
    <property type="entry name" value="PRK07231.1"/>
    <property type="match status" value="1"/>
</dbReference>
<dbReference type="PANTHER" id="PTHR24321">
    <property type="entry name" value="DEHYDROGENASES, SHORT CHAIN"/>
    <property type="match status" value="1"/>
</dbReference>
<dbReference type="PANTHER" id="PTHR24321:SF8">
    <property type="entry name" value="ESTRADIOL 17-BETA-DEHYDROGENASE 8-RELATED"/>
    <property type="match status" value="1"/>
</dbReference>
<dbReference type="Pfam" id="PF13561">
    <property type="entry name" value="adh_short_C2"/>
    <property type="match status" value="1"/>
</dbReference>
<dbReference type="PRINTS" id="PR00081">
    <property type="entry name" value="GDHRDH"/>
</dbReference>
<dbReference type="PRINTS" id="PR00080">
    <property type="entry name" value="SDRFAMILY"/>
</dbReference>
<dbReference type="SUPFAM" id="SSF51735">
    <property type="entry name" value="NAD(P)-binding Rossmann-fold domains"/>
    <property type="match status" value="1"/>
</dbReference>
<dbReference type="PROSITE" id="PS00061">
    <property type="entry name" value="ADH_SHORT"/>
    <property type="match status" value="1"/>
</dbReference>
<comment type="function">
    <text evidence="2">Catalyzes the oxidation of cyclohexanol to cyclohexanone. Required for the conversion of cyclohexanol to adipic acid.</text>
</comment>
<comment type="catalytic activity">
    <reaction evidence="5">
        <text>cyclohexanol + NAD(+) = cyclohexanone + NADH + H(+)</text>
        <dbReference type="Rhea" id="RHEA:10044"/>
        <dbReference type="ChEBI" id="CHEBI:15378"/>
        <dbReference type="ChEBI" id="CHEBI:17854"/>
        <dbReference type="ChEBI" id="CHEBI:18099"/>
        <dbReference type="ChEBI" id="CHEBI:57540"/>
        <dbReference type="ChEBI" id="CHEBI:57945"/>
        <dbReference type="EC" id="1.1.1.245"/>
    </reaction>
</comment>
<comment type="disruption phenotype">
    <text evidence="2">Mutant accumulates cyclohexanol.</text>
</comment>
<comment type="similarity">
    <text evidence="4">Belongs to the short-chain dehydrogenases/reductases (SDR) family.</text>
</comment>
<organism>
    <name type="scientific">Acinetobacter sp. (strain SE19)</name>
    <dbReference type="NCBI Taxonomy" id="135835"/>
    <lineage>
        <taxon>Bacteria</taxon>
        <taxon>Pseudomonadati</taxon>
        <taxon>Pseudomonadota</taxon>
        <taxon>Gammaproteobacteria</taxon>
        <taxon>Moraxellales</taxon>
        <taxon>Moraxellaceae</taxon>
        <taxon>Acinetobacter</taxon>
    </lineage>
</organism>
<proteinExistence type="evidence at protein level"/>
<sequence>MEKIMSNKFNNKVALITGAGSGIGKSTALLLAQQGVSVVVSDINLEAAQKVVDEIVALGGKAAANKANTAEPEDMKAAVEFAVSTFGALHLAFNNAGILGEVNSTEELSIEGWRRVIDVNLNAVFYSMHYEVPAILAAGGGAIVNTASIAGLIGIQNISGYVAAKHGVTGLTKAAALEYADKGIRINSVHPGYIKTPLIAEFEEAEMVKLHPIGRLGQPEEVAQVVAFLLSDDASFVTGSQYVVDGAYTSK</sequence>
<feature type="chain" id="PRO_0000453522" description="Cyclohexanol dehydrogenase">
    <location>
        <begin position="1"/>
        <end position="251"/>
    </location>
</feature>
<feature type="active site" description="Proton acceptor" evidence="1">
    <location>
        <position position="161"/>
    </location>
</feature>
<feature type="binding site" evidence="1">
    <location>
        <position position="42"/>
    </location>
    <ligand>
        <name>NAD(+)</name>
        <dbReference type="ChEBI" id="CHEBI:57540"/>
    </ligand>
</feature>
<feature type="binding site" evidence="1">
    <location>
        <position position="95"/>
    </location>
    <ligand>
        <name>NAD(+)</name>
        <dbReference type="ChEBI" id="CHEBI:57540"/>
    </ligand>
</feature>
<feature type="binding site" evidence="1">
    <location>
        <position position="161"/>
    </location>
    <ligand>
        <name>NAD(+)</name>
        <dbReference type="ChEBI" id="CHEBI:57540"/>
    </ligand>
</feature>
<feature type="binding site" evidence="1">
    <location>
        <position position="165"/>
    </location>
    <ligand>
        <name>NAD(+)</name>
        <dbReference type="ChEBI" id="CHEBI:57540"/>
    </ligand>
</feature>
<feature type="binding site" evidence="1">
    <location>
        <position position="194"/>
    </location>
    <ligand>
        <name>NAD(+)</name>
        <dbReference type="ChEBI" id="CHEBI:57540"/>
    </ligand>
</feature>
<feature type="binding site" evidence="1">
    <location>
        <position position="196"/>
    </location>
    <ligand>
        <name>NAD(+)</name>
        <dbReference type="ChEBI" id="CHEBI:57540"/>
    </ligand>
</feature>
<evidence type="ECO:0000250" key="1">
    <source>
        <dbReference type="UniProtKB" id="P9WGT1"/>
    </source>
</evidence>
<evidence type="ECO:0000269" key="2">
    <source>
    </source>
</evidence>
<evidence type="ECO:0000303" key="3">
    <source>
    </source>
</evidence>
<evidence type="ECO:0000305" key="4"/>
<evidence type="ECO:0000305" key="5">
    <source>
    </source>
</evidence>
<keyword id="KW-0520">NAD</keyword>
<keyword id="KW-0560">Oxidoreductase</keyword>